<sequence length="338" mass="37656">MERAITPEKRDDDLQFDATLRPRTLQDYIGQEKIRENLKLFIDAAKGRSEALDHVLLYGPPGLGKTTLANIIACEMGVNIKSTSGPVIERPGDLAAILTNLEPHDVLFIDEIHRLSHVVEEILYPAMEDFQLDIIIGQGPSARSIKLDLPRFTLVGATTRAGLLSSPLRDRFGVISRLEFYTHDELAFIVTRSARILGMAIDREGALELARRSRGTPRIANRLLRRVRDYAQVRADGAITLSVVQETLRLLEIDEMGFDQMDRMILLTIIDKFGGGPVGLDTIGAAIGEESDTIEDVYEPFLIQNGFLNRTPRGRVATPAAYQHFGRLTPERPQGSLF</sequence>
<evidence type="ECO:0000255" key="1">
    <source>
        <dbReference type="HAMAP-Rule" id="MF_00016"/>
    </source>
</evidence>
<gene>
    <name evidence="1" type="primary">ruvB</name>
    <name type="ordered locus">Glov_2173</name>
</gene>
<proteinExistence type="inferred from homology"/>
<dbReference type="EC" id="3.6.4.-" evidence="1"/>
<dbReference type="EMBL" id="CP001089">
    <property type="protein sequence ID" value="ACD95889.1"/>
    <property type="molecule type" value="Genomic_DNA"/>
</dbReference>
<dbReference type="RefSeq" id="WP_012470227.1">
    <property type="nucleotide sequence ID" value="NC_010814.1"/>
</dbReference>
<dbReference type="SMR" id="B3E468"/>
<dbReference type="STRING" id="398767.Glov_2173"/>
<dbReference type="KEGG" id="glo:Glov_2173"/>
<dbReference type="eggNOG" id="COG2255">
    <property type="taxonomic scope" value="Bacteria"/>
</dbReference>
<dbReference type="HOGENOM" id="CLU_055599_1_0_7"/>
<dbReference type="OrthoDB" id="9804478at2"/>
<dbReference type="Proteomes" id="UP000002420">
    <property type="component" value="Chromosome"/>
</dbReference>
<dbReference type="GO" id="GO:0005737">
    <property type="term" value="C:cytoplasm"/>
    <property type="evidence" value="ECO:0007669"/>
    <property type="project" value="UniProtKB-SubCell"/>
</dbReference>
<dbReference type="GO" id="GO:0048476">
    <property type="term" value="C:Holliday junction resolvase complex"/>
    <property type="evidence" value="ECO:0007669"/>
    <property type="project" value="UniProtKB-UniRule"/>
</dbReference>
<dbReference type="GO" id="GO:0005524">
    <property type="term" value="F:ATP binding"/>
    <property type="evidence" value="ECO:0007669"/>
    <property type="project" value="UniProtKB-UniRule"/>
</dbReference>
<dbReference type="GO" id="GO:0016887">
    <property type="term" value="F:ATP hydrolysis activity"/>
    <property type="evidence" value="ECO:0007669"/>
    <property type="project" value="InterPro"/>
</dbReference>
<dbReference type="GO" id="GO:0000400">
    <property type="term" value="F:four-way junction DNA binding"/>
    <property type="evidence" value="ECO:0007669"/>
    <property type="project" value="UniProtKB-UniRule"/>
</dbReference>
<dbReference type="GO" id="GO:0009378">
    <property type="term" value="F:four-way junction helicase activity"/>
    <property type="evidence" value="ECO:0007669"/>
    <property type="project" value="InterPro"/>
</dbReference>
<dbReference type="GO" id="GO:0006310">
    <property type="term" value="P:DNA recombination"/>
    <property type="evidence" value="ECO:0007669"/>
    <property type="project" value="UniProtKB-UniRule"/>
</dbReference>
<dbReference type="GO" id="GO:0006281">
    <property type="term" value="P:DNA repair"/>
    <property type="evidence" value="ECO:0007669"/>
    <property type="project" value="UniProtKB-UniRule"/>
</dbReference>
<dbReference type="CDD" id="cd00009">
    <property type="entry name" value="AAA"/>
    <property type="match status" value="1"/>
</dbReference>
<dbReference type="FunFam" id="3.40.50.300:FF:000073">
    <property type="entry name" value="Holliday junction ATP-dependent DNA helicase RuvB"/>
    <property type="match status" value="1"/>
</dbReference>
<dbReference type="Gene3D" id="1.10.8.60">
    <property type="match status" value="1"/>
</dbReference>
<dbReference type="Gene3D" id="3.40.50.300">
    <property type="entry name" value="P-loop containing nucleotide triphosphate hydrolases"/>
    <property type="match status" value="1"/>
</dbReference>
<dbReference type="Gene3D" id="1.10.10.10">
    <property type="entry name" value="Winged helix-like DNA-binding domain superfamily/Winged helix DNA-binding domain"/>
    <property type="match status" value="1"/>
</dbReference>
<dbReference type="HAMAP" id="MF_00016">
    <property type="entry name" value="DNA_HJ_migration_RuvB"/>
    <property type="match status" value="1"/>
</dbReference>
<dbReference type="InterPro" id="IPR003593">
    <property type="entry name" value="AAA+_ATPase"/>
</dbReference>
<dbReference type="InterPro" id="IPR041445">
    <property type="entry name" value="AAA_lid_4"/>
</dbReference>
<dbReference type="InterPro" id="IPR004605">
    <property type="entry name" value="DNA_helicase_Holl-junc_RuvB"/>
</dbReference>
<dbReference type="InterPro" id="IPR027417">
    <property type="entry name" value="P-loop_NTPase"/>
</dbReference>
<dbReference type="InterPro" id="IPR008824">
    <property type="entry name" value="RuvB-like_N"/>
</dbReference>
<dbReference type="InterPro" id="IPR008823">
    <property type="entry name" value="RuvB_C"/>
</dbReference>
<dbReference type="InterPro" id="IPR036388">
    <property type="entry name" value="WH-like_DNA-bd_sf"/>
</dbReference>
<dbReference type="InterPro" id="IPR036390">
    <property type="entry name" value="WH_DNA-bd_sf"/>
</dbReference>
<dbReference type="NCBIfam" id="NF000868">
    <property type="entry name" value="PRK00080.1"/>
    <property type="match status" value="1"/>
</dbReference>
<dbReference type="NCBIfam" id="TIGR00635">
    <property type="entry name" value="ruvB"/>
    <property type="match status" value="1"/>
</dbReference>
<dbReference type="PANTHER" id="PTHR42848">
    <property type="match status" value="1"/>
</dbReference>
<dbReference type="PANTHER" id="PTHR42848:SF1">
    <property type="entry name" value="HOLLIDAY JUNCTION BRANCH MIGRATION COMPLEX SUBUNIT RUVB"/>
    <property type="match status" value="1"/>
</dbReference>
<dbReference type="Pfam" id="PF17864">
    <property type="entry name" value="AAA_lid_4"/>
    <property type="match status" value="1"/>
</dbReference>
<dbReference type="Pfam" id="PF05491">
    <property type="entry name" value="RuvB_C"/>
    <property type="match status" value="1"/>
</dbReference>
<dbReference type="Pfam" id="PF05496">
    <property type="entry name" value="RuvB_N"/>
    <property type="match status" value="1"/>
</dbReference>
<dbReference type="SMART" id="SM00382">
    <property type="entry name" value="AAA"/>
    <property type="match status" value="1"/>
</dbReference>
<dbReference type="SUPFAM" id="SSF52540">
    <property type="entry name" value="P-loop containing nucleoside triphosphate hydrolases"/>
    <property type="match status" value="1"/>
</dbReference>
<dbReference type="SUPFAM" id="SSF46785">
    <property type="entry name" value="Winged helix' DNA-binding domain"/>
    <property type="match status" value="1"/>
</dbReference>
<reference key="1">
    <citation type="submission" date="2008-05" db="EMBL/GenBank/DDBJ databases">
        <title>Complete sequence of chromosome of Geobacter lovleyi SZ.</title>
        <authorList>
            <consortium name="US DOE Joint Genome Institute"/>
            <person name="Lucas S."/>
            <person name="Copeland A."/>
            <person name="Lapidus A."/>
            <person name="Glavina del Rio T."/>
            <person name="Dalin E."/>
            <person name="Tice H."/>
            <person name="Bruce D."/>
            <person name="Goodwin L."/>
            <person name="Pitluck S."/>
            <person name="Chertkov O."/>
            <person name="Meincke L."/>
            <person name="Brettin T."/>
            <person name="Detter J.C."/>
            <person name="Han C."/>
            <person name="Tapia R."/>
            <person name="Kuske C.R."/>
            <person name="Schmutz J."/>
            <person name="Larimer F."/>
            <person name="Land M."/>
            <person name="Hauser L."/>
            <person name="Kyrpides N."/>
            <person name="Mikhailova N."/>
            <person name="Sung Y."/>
            <person name="Fletcher K.E."/>
            <person name="Ritalahti K.M."/>
            <person name="Loeffler F.E."/>
            <person name="Richardson P."/>
        </authorList>
    </citation>
    <scope>NUCLEOTIDE SEQUENCE [LARGE SCALE GENOMIC DNA]</scope>
    <source>
        <strain>ATCC BAA-1151 / DSM 17278 / SZ</strain>
    </source>
</reference>
<feature type="chain" id="PRO_1000089648" description="Holliday junction branch migration complex subunit RuvB">
    <location>
        <begin position="1"/>
        <end position="338"/>
    </location>
</feature>
<feature type="region of interest" description="Large ATPase domain (RuvB-L)" evidence="1">
    <location>
        <begin position="1"/>
        <end position="181"/>
    </location>
</feature>
<feature type="region of interest" description="Small ATPAse domain (RuvB-S)" evidence="1">
    <location>
        <begin position="182"/>
        <end position="252"/>
    </location>
</feature>
<feature type="region of interest" description="Head domain (RuvB-H)" evidence="1">
    <location>
        <begin position="255"/>
        <end position="338"/>
    </location>
</feature>
<feature type="binding site" evidence="1">
    <location>
        <position position="20"/>
    </location>
    <ligand>
        <name>ATP</name>
        <dbReference type="ChEBI" id="CHEBI:30616"/>
    </ligand>
</feature>
<feature type="binding site" evidence="1">
    <location>
        <position position="21"/>
    </location>
    <ligand>
        <name>ATP</name>
        <dbReference type="ChEBI" id="CHEBI:30616"/>
    </ligand>
</feature>
<feature type="binding site" evidence="1">
    <location>
        <position position="62"/>
    </location>
    <ligand>
        <name>ATP</name>
        <dbReference type="ChEBI" id="CHEBI:30616"/>
    </ligand>
</feature>
<feature type="binding site" evidence="1">
    <location>
        <position position="65"/>
    </location>
    <ligand>
        <name>ATP</name>
        <dbReference type="ChEBI" id="CHEBI:30616"/>
    </ligand>
</feature>
<feature type="binding site" evidence="1">
    <location>
        <position position="66"/>
    </location>
    <ligand>
        <name>ATP</name>
        <dbReference type="ChEBI" id="CHEBI:30616"/>
    </ligand>
</feature>
<feature type="binding site" evidence="1">
    <location>
        <position position="66"/>
    </location>
    <ligand>
        <name>Mg(2+)</name>
        <dbReference type="ChEBI" id="CHEBI:18420"/>
    </ligand>
</feature>
<feature type="binding site" evidence="1">
    <location>
        <position position="67"/>
    </location>
    <ligand>
        <name>ATP</name>
        <dbReference type="ChEBI" id="CHEBI:30616"/>
    </ligand>
</feature>
<feature type="binding site" evidence="1">
    <location>
        <begin position="128"/>
        <end position="130"/>
    </location>
    <ligand>
        <name>ATP</name>
        <dbReference type="ChEBI" id="CHEBI:30616"/>
    </ligand>
</feature>
<feature type="binding site" evidence="1">
    <location>
        <position position="171"/>
    </location>
    <ligand>
        <name>ATP</name>
        <dbReference type="ChEBI" id="CHEBI:30616"/>
    </ligand>
</feature>
<feature type="binding site" evidence="1">
    <location>
        <position position="181"/>
    </location>
    <ligand>
        <name>ATP</name>
        <dbReference type="ChEBI" id="CHEBI:30616"/>
    </ligand>
</feature>
<feature type="binding site" evidence="1">
    <location>
        <position position="218"/>
    </location>
    <ligand>
        <name>ATP</name>
        <dbReference type="ChEBI" id="CHEBI:30616"/>
    </ligand>
</feature>
<feature type="binding site" evidence="1">
    <location>
        <position position="310"/>
    </location>
    <ligand>
        <name>DNA</name>
        <dbReference type="ChEBI" id="CHEBI:16991"/>
    </ligand>
</feature>
<feature type="binding site" evidence="1">
    <location>
        <position position="315"/>
    </location>
    <ligand>
        <name>DNA</name>
        <dbReference type="ChEBI" id="CHEBI:16991"/>
    </ligand>
</feature>
<name>RUVB_TRIL1</name>
<keyword id="KW-0067">ATP-binding</keyword>
<keyword id="KW-0963">Cytoplasm</keyword>
<keyword id="KW-0227">DNA damage</keyword>
<keyword id="KW-0233">DNA recombination</keyword>
<keyword id="KW-0234">DNA repair</keyword>
<keyword id="KW-0238">DNA-binding</keyword>
<keyword id="KW-0378">Hydrolase</keyword>
<keyword id="KW-0547">Nucleotide-binding</keyword>
<keyword id="KW-1185">Reference proteome</keyword>
<protein>
    <recommendedName>
        <fullName evidence="1">Holliday junction branch migration complex subunit RuvB</fullName>
        <ecNumber evidence="1">3.6.4.-</ecNumber>
    </recommendedName>
</protein>
<comment type="function">
    <text evidence="1">The RuvA-RuvB-RuvC complex processes Holliday junction (HJ) DNA during genetic recombination and DNA repair, while the RuvA-RuvB complex plays an important role in the rescue of blocked DNA replication forks via replication fork reversal (RFR). RuvA specifically binds to HJ cruciform DNA, conferring on it an open structure. The RuvB hexamer acts as an ATP-dependent pump, pulling dsDNA into and through the RuvAB complex. RuvB forms 2 homohexamers on either side of HJ DNA bound by 1 or 2 RuvA tetramers; 4 subunits per hexamer contact DNA at a time. Coordinated motions by a converter formed by DNA-disengaged RuvB subunits stimulates ATP hydrolysis and nucleotide exchange. Immobilization of the converter enables RuvB to convert the ATP-contained energy into a lever motion, pulling 2 nucleotides of DNA out of the RuvA tetramer per ATP hydrolyzed, thus driving DNA branch migration. The RuvB motors rotate together with the DNA substrate, which together with the progressing nucleotide cycle form the mechanistic basis for DNA recombination by continuous HJ branch migration. Branch migration allows RuvC to scan DNA until it finds its consensus sequence, where it cleaves and resolves cruciform DNA.</text>
</comment>
<comment type="catalytic activity">
    <reaction evidence="1">
        <text>ATP + H2O = ADP + phosphate + H(+)</text>
        <dbReference type="Rhea" id="RHEA:13065"/>
        <dbReference type="ChEBI" id="CHEBI:15377"/>
        <dbReference type="ChEBI" id="CHEBI:15378"/>
        <dbReference type="ChEBI" id="CHEBI:30616"/>
        <dbReference type="ChEBI" id="CHEBI:43474"/>
        <dbReference type="ChEBI" id="CHEBI:456216"/>
    </reaction>
</comment>
<comment type="subunit">
    <text evidence="1">Homohexamer. Forms an RuvA(8)-RuvB(12)-Holliday junction (HJ) complex. HJ DNA is sandwiched between 2 RuvA tetramers; dsDNA enters through RuvA and exits via RuvB. An RuvB hexamer assembles on each DNA strand where it exits the tetramer. Each RuvB hexamer is contacted by two RuvA subunits (via domain III) on 2 adjacent RuvB subunits; this complex drives branch migration. In the full resolvosome a probable DNA-RuvA(4)-RuvB(12)-RuvC(2) complex forms which resolves the HJ.</text>
</comment>
<comment type="subcellular location">
    <subcellularLocation>
        <location evidence="1">Cytoplasm</location>
    </subcellularLocation>
</comment>
<comment type="domain">
    <text evidence="1">Has 3 domains, the large (RuvB-L) and small ATPase (RuvB-S) domains and the C-terminal head (RuvB-H) domain. The head domain binds DNA, while the ATPase domains jointly bind ATP, ADP or are empty depending on the state of the subunit in the translocation cycle. During a single DNA translocation step the structure of each domain remains the same, but their relative positions change.</text>
</comment>
<comment type="similarity">
    <text evidence="1">Belongs to the RuvB family.</text>
</comment>
<accession>B3E468</accession>
<organism>
    <name type="scientific">Trichlorobacter lovleyi (strain ATCC BAA-1151 / DSM 17278 / SZ)</name>
    <name type="common">Geobacter lovleyi</name>
    <dbReference type="NCBI Taxonomy" id="398767"/>
    <lineage>
        <taxon>Bacteria</taxon>
        <taxon>Pseudomonadati</taxon>
        <taxon>Thermodesulfobacteriota</taxon>
        <taxon>Desulfuromonadia</taxon>
        <taxon>Geobacterales</taxon>
        <taxon>Geobacteraceae</taxon>
        <taxon>Trichlorobacter</taxon>
    </lineage>
</organism>